<protein>
    <recommendedName>
        <fullName>RNA-directed RNA polymerase VP1</fullName>
        <ecNumber>2.7.7.48</ecNumber>
    </recommendedName>
    <alternativeName>
        <fullName>Virion protein 1</fullName>
        <shortName>VP1</shortName>
    </alternativeName>
</protein>
<dbReference type="EC" id="2.7.7.48"/>
<dbReference type="EMBL" id="AF133430">
    <property type="protein sequence ID" value="AAF78849.1"/>
    <property type="molecule type" value="Genomic_RNA"/>
</dbReference>
<dbReference type="RefSeq" id="NP_694469.1">
    <property type="nucleotide sequence ID" value="NC_004211.1"/>
</dbReference>
<dbReference type="SMR" id="Q9INJ1"/>
<dbReference type="IntAct" id="Q9INJ1">
    <property type="interactions" value="1"/>
</dbReference>
<dbReference type="KEGG" id="vg:995347"/>
<dbReference type="Proteomes" id="UP000000832">
    <property type="component" value="Genome"/>
</dbReference>
<dbReference type="GO" id="GO:0044423">
    <property type="term" value="C:virion component"/>
    <property type="evidence" value="ECO:0007669"/>
    <property type="project" value="UniProtKB-KW"/>
</dbReference>
<dbReference type="GO" id="GO:0016787">
    <property type="term" value="F:hydrolase activity"/>
    <property type="evidence" value="ECO:0007669"/>
    <property type="project" value="UniProtKB-KW"/>
</dbReference>
<dbReference type="GO" id="GO:0000166">
    <property type="term" value="F:nucleotide binding"/>
    <property type="evidence" value="ECO:0007669"/>
    <property type="project" value="UniProtKB-KW"/>
</dbReference>
<dbReference type="GO" id="GO:0003723">
    <property type="term" value="F:RNA binding"/>
    <property type="evidence" value="ECO:0007669"/>
    <property type="project" value="InterPro"/>
</dbReference>
<dbReference type="GO" id="GO:0003968">
    <property type="term" value="F:RNA-directed RNA polymerase activity"/>
    <property type="evidence" value="ECO:0007669"/>
    <property type="project" value="UniProtKB-KW"/>
</dbReference>
<dbReference type="GO" id="GO:0019079">
    <property type="term" value="P:viral genome replication"/>
    <property type="evidence" value="ECO:0007669"/>
    <property type="project" value="InterPro"/>
</dbReference>
<dbReference type="InterPro" id="IPR007097">
    <property type="entry name" value="RNA-dir_pol_reovirus"/>
</dbReference>
<dbReference type="InterPro" id="IPR026381">
    <property type="entry name" value="Seadorna_RNAP"/>
</dbReference>
<dbReference type="NCBIfam" id="TIGR04234">
    <property type="entry name" value="seadorna_RNAP"/>
    <property type="match status" value="1"/>
</dbReference>
<dbReference type="PROSITE" id="PS50523">
    <property type="entry name" value="RDRP_DSRNA_REO"/>
    <property type="match status" value="1"/>
</dbReference>
<dbReference type="PROSITE" id="PS00052">
    <property type="entry name" value="RIBOSOMAL_S7"/>
    <property type="match status" value="1"/>
</dbReference>
<reference key="1">
    <citation type="journal article" date="2000" name="J. Gen. Virol.">
        <title>Complete sequence determination and genetic analysis of Banna virus and Kadipiro virus: proposal for assignment to a new genus (Seadornavirus) within the family Reoviridae.</title>
        <authorList>
            <person name="Attoui H."/>
            <person name="Billoir F."/>
            <person name="Biagini P."/>
            <person name="de Micco P."/>
            <person name="de Lamballerie X."/>
        </authorList>
    </citation>
    <scope>NUCLEOTIDE SEQUENCE [GENOMIC RNA]</scope>
    <source>
        <strain>JKT-6423</strain>
    </source>
</reference>
<organism>
    <name type="scientific">Banna virus</name>
    <name type="common">BAV</name>
    <dbReference type="NCBI Taxonomy" id="77763"/>
    <lineage>
        <taxon>Viruses</taxon>
        <taxon>Riboviria</taxon>
        <taxon>Orthornavirae</taxon>
        <taxon>Duplornaviricota</taxon>
        <taxon>Resentoviricetes</taxon>
        <taxon>Reovirales</taxon>
        <taxon>Sedoreoviridae</taxon>
        <taxon>Seadornavirus</taxon>
        <taxon>Seadornavirus bannaense</taxon>
    </lineage>
</organism>
<feature type="chain" id="PRO_0000404236" description="RNA-directed RNA polymerase VP1">
    <location>
        <begin position="1"/>
        <end position="1214"/>
    </location>
</feature>
<feature type="domain" description="RdRp catalytic" evidence="1">
    <location>
        <begin position="610"/>
        <end position="805"/>
    </location>
</feature>
<accession>Q9INJ1</accession>
<name>RDRP_BANNV</name>
<evidence type="ECO:0000255" key="1">
    <source>
        <dbReference type="PROSITE-ProRule" id="PRU00539"/>
    </source>
</evidence>
<evidence type="ECO:0000305" key="2"/>
<proteinExistence type="inferred from homology"/>
<comment type="function">
    <text evidence="1">RNA-directed RNA polymerase that is involved in transcription and genome replication. Following infection, it catalyzes the synthesis of fully conservative plus strands. After core assembly, which consists in recruitment of one capped plus-strand for each genomic segments and polymerase complexes, the polymerase switches mode and catalyzes the synthesis of complementary minus-strands (By similarity).</text>
</comment>
<comment type="catalytic activity">
    <reaction evidence="1">
        <text>RNA(n) + a ribonucleoside 5'-triphosphate = RNA(n+1) + diphosphate</text>
        <dbReference type="Rhea" id="RHEA:21248"/>
        <dbReference type="Rhea" id="RHEA-COMP:14527"/>
        <dbReference type="Rhea" id="RHEA-COMP:17342"/>
        <dbReference type="ChEBI" id="CHEBI:33019"/>
        <dbReference type="ChEBI" id="CHEBI:61557"/>
        <dbReference type="ChEBI" id="CHEBI:140395"/>
        <dbReference type="EC" id="2.7.7.48"/>
    </reaction>
</comment>
<comment type="subcellular location">
    <subcellularLocation>
        <location evidence="2">Virion</location>
    </subcellularLocation>
</comment>
<comment type="similarity">
    <text evidence="2">Belongs to the reoviridae RNA-directed RNA polymerase family.</text>
</comment>
<keyword id="KW-0378">Hydrolase</keyword>
<keyword id="KW-0547">Nucleotide-binding</keyword>
<keyword id="KW-0548">Nucleotidyltransferase</keyword>
<keyword id="KW-1185">Reference proteome</keyword>
<keyword id="KW-0696">RNA-directed RNA polymerase</keyword>
<keyword id="KW-0808">Transferase</keyword>
<keyword id="KW-0693">Viral RNA replication</keyword>
<keyword id="KW-0946">Virion</keyword>
<gene>
    <name type="primary">Segment-1</name>
    <name type="synonym">S1</name>
</gene>
<sequence length="1214" mass="137462">MDIQEQFEGYLREEVDLLNKFEDSHFKQLEVFYTNSQADHVINKDKAQFSDLPFHTTLYKEVNGKRVKLGTLLNWTKAERLDTIRHESMIKDERLRRLIDFDYSWIDYAVVLQRYLDEGNVIAPADILKFDSDFINNIKHPTEKNNFLDIKVIKECETYILMKDDNGIRDPDILRAWELDSIPDVIELDVDGEVKKFNLRKEMIKRIQDEAPVYFFASVSLCSRNLDPNISEVKLWLEYFIGSEDFFGFNGPNVVVSKSLLAAKRFEVVVNHLRKVAAFELDDESKEVMTEWLKYIMIDPVYRSYKNRGAFGNLNQHVFARTKSEGLSWSLIDIGTTNFELKPTKKLAGSYVKKFNLVDDVLVEESLKDLRNEGLYKMADITRRMIDADITPENVKKGKLNRLALSYCGYTGSHSATAMVKQFNGTKDLDPNCDPMFVDIVKDNMKVYMQEGLQKYPHGSRKINRLDILFKGGTSSASSTNEHATVNGRFRYRSELYRERDVNSSTVFKTATAGQYRVVKKISAKLKSKNANIITHPMNFINSKVSDLDVVVNAGSRLVRGTRAKRIITPNYGTIYAASLMTVLPAVRLLSSRASNMGALSTQGSLVDRAPHDVMAPQLAVTSSDDVSKVCVAKDFGQFDTSQWGQISKAHADGVRSMKVHYSMGHDALVDLDLNDASFADLLEVTAMSFEKPLKYKMNGLVCESAGVKSGELTTQTRNTTTNISHSTVALDDYNNRAYRLNLPKLELVTDNKVGDDSVEVLRVVDGSPLTPEIAKLYVSCMQDHADRNHLEISAKRTIVGNNVAEHIKIWVFKGYLALDVFLDSVTSEKNSFSNLNYLEQVNILYDMAMTLMIRYCSVQACMTQFCNDMKLLNGIRAGNYTFIPTPKIICAYGTPEICLRAPEIRSFGRYLPIDKDEYSVLNDLVASLSTNKPKMEFVSQMIEQNGNKVHSLWLDHFKRKNDVNPNGGGIHISEGLKRLMPEYCEKHLNELVYKTLDDKVIRDYTSDIIISNICKGKLSKAPKLAFYANFYLSLTNTNGVDSPYLTADEGVKNVHRVIGLSYRNTLSTSPTSNVDRILRNNPGSAPAYLTGNDILGVLSDYPYQNWRTVVELLDITEPSATAIIEVATNQMHAYLADKDLNTANLFDNTSRTYDISDRTYPKFVNITSSLSNSNRRGFQIEAMKHVIYMARRGVAVLANTHPTKIGNTVYYDY</sequence>